<accession>Q9JIT0</accession>
<accession>Q766D0</accession>
<accession>Q91WC6</accession>
<accession>Q9JIS9</accession>
<sequence>MEGQDEVSAREQHFHSQVRESTICFLLFAILYIVSYFIIIRYKRKSDEQEDEDAVVNRISLFLSTFTLAVSAGAVLLLPFSIISNEILLAFPHNYYIQWLNGSLIHGLWNLASLFSNLCLFVLMPFAFFFLESEGFAGLKKGIRARILETLVMLLLLALLILGMVWVASALIDSDAASMESLYDLWEFYLPYLYSCISLMGCLLLLLCTPVGLSRMFTVMGQLLVKPAILEDLDEQIYMITLEEEALQRRLHGLSSSVEYNVMELEQELENVKILKTKLERRKKASAWERNLVYPAVMVLLLIETSISVLLVACNILCLLVDETAMPKGTRGPGIGSASLSTFGFVGAALEIILIFYLMVSSVVGFYSLRFFGNFTPKKDDTTMTKIIGNCVSILVLSSALPVMSRTLGITRFDLLGDFGRFNWLGNFYIVLSYNLLFAIMTTLCLIRKFTSAVREELFKALGLHKLHLSDTSRDSETTKPSANGHQKAL</sequence>
<evidence type="ECO:0000250" key="1"/>
<evidence type="ECO:0000255" key="2"/>
<evidence type="ECO:0000303" key="3">
    <source>
    </source>
</evidence>
<evidence type="ECO:0000303" key="4">
    <source>
    </source>
</evidence>
<evidence type="ECO:0000305" key="5"/>
<comment type="function">
    <text>Putative membrane receptor.</text>
</comment>
<comment type="subcellular location">
    <subcellularLocation>
        <location evidence="1">Membrane</location>
        <topology evidence="1">Multi-pass membrane protein</topology>
    </subcellularLocation>
</comment>
<comment type="alternative products">
    <event type="alternative splicing"/>
    <isoform>
        <id>Q9JIT0-1</id>
        <name>1</name>
        <name>LMBR1L</name>
        <sequence type="displayed"/>
    </isoform>
    <isoform>
        <id>Q9JIT0-2</id>
        <name>2</name>
        <name>LMBR1S</name>
        <sequence type="described" ref="VSP_016889 VSP_016890"/>
    </isoform>
    <isoform>
        <id>Q9JIT0-3</id>
        <name>3</name>
        <sequence type="described" ref="VSP_016891"/>
    </isoform>
</comment>
<comment type="similarity">
    <text evidence="5">Belongs to the LIMR family.</text>
</comment>
<comment type="sequence caution" evidence="5">
    <conflict type="frameshift">
        <sequence resource="EMBL-CDS" id="BAD07410"/>
    </conflict>
</comment>
<dbReference type="EMBL" id="AF190665">
    <property type="protein sequence ID" value="AAF91092.1"/>
    <property type="molecule type" value="mRNA"/>
</dbReference>
<dbReference type="EMBL" id="AF190666">
    <property type="protein sequence ID" value="AAF91093.1"/>
    <property type="molecule type" value="mRNA"/>
</dbReference>
<dbReference type="EMBL" id="BC016110">
    <property type="protein sequence ID" value="AAH16110.1"/>
    <property type="molecule type" value="mRNA"/>
</dbReference>
<dbReference type="EMBL" id="AB114903">
    <property type="protein sequence ID" value="BAD07410.1"/>
    <property type="status" value="ALT_FRAME"/>
    <property type="molecule type" value="Genomic_DNA"/>
</dbReference>
<dbReference type="CCDS" id="CCDS19148.1">
    <molecule id="Q9JIT0-1"/>
</dbReference>
<dbReference type="RefSeq" id="NP_064691.2">
    <molecule id="Q9JIT0-1"/>
    <property type="nucleotide sequence ID" value="NM_020295.3"/>
</dbReference>
<dbReference type="FunCoup" id="Q9JIT0">
    <property type="interactions" value="3713"/>
</dbReference>
<dbReference type="STRING" id="10090.ENSMUSP00000058405"/>
<dbReference type="GlyGen" id="Q9JIT0">
    <property type="glycosylation" value="1 site, 1 N-linked glycan (1 site)"/>
</dbReference>
<dbReference type="PhosphoSitePlus" id="Q9JIT0"/>
<dbReference type="PaxDb" id="10090-ENSMUSP00000058405"/>
<dbReference type="ProteomicsDB" id="290044">
    <molecule id="Q9JIT0-1"/>
</dbReference>
<dbReference type="ProteomicsDB" id="290045">
    <molecule id="Q9JIT0-2"/>
</dbReference>
<dbReference type="ProteomicsDB" id="290046">
    <molecule id="Q9JIT0-3"/>
</dbReference>
<dbReference type="Antibodypedia" id="18896">
    <property type="antibodies" value="145 antibodies from 22 providers"/>
</dbReference>
<dbReference type="DNASU" id="56873"/>
<dbReference type="Ensembl" id="ENSMUST00000055195.11">
    <molecule id="Q9JIT0-1"/>
    <property type="protein sequence ID" value="ENSMUSP00000058405.5"/>
    <property type="gene ID" value="ENSMUSG00000010721.16"/>
</dbReference>
<dbReference type="Ensembl" id="ENSMUST00000198105.5">
    <molecule id="Q9JIT0-3"/>
    <property type="protein sequence ID" value="ENSMUSP00000142755.2"/>
    <property type="gene ID" value="ENSMUSG00000010721.16"/>
</dbReference>
<dbReference type="GeneID" id="56873"/>
<dbReference type="KEGG" id="mmu:56873"/>
<dbReference type="UCSC" id="uc008wug.1">
    <molecule id="Q9JIT0-1"/>
    <property type="organism name" value="mouse"/>
</dbReference>
<dbReference type="UCSC" id="uc012dtv.1">
    <molecule id="Q9JIT0-3"/>
    <property type="organism name" value="mouse"/>
</dbReference>
<dbReference type="AGR" id="MGI:1861746"/>
<dbReference type="CTD" id="64327"/>
<dbReference type="MGI" id="MGI:1861746">
    <property type="gene designation" value="Lmbr1"/>
</dbReference>
<dbReference type="VEuPathDB" id="HostDB:ENSMUSG00000010721"/>
<dbReference type="eggNOG" id="KOG3722">
    <property type="taxonomic scope" value="Eukaryota"/>
</dbReference>
<dbReference type="GeneTree" id="ENSGT00390000007809"/>
<dbReference type="HOGENOM" id="CLU_029445_1_0_1"/>
<dbReference type="InParanoid" id="Q9JIT0"/>
<dbReference type="OMA" id="KSYYIQW"/>
<dbReference type="OrthoDB" id="5596951at2759"/>
<dbReference type="PhylomeDB" id="Q9JIT0"/>
<dbReference type="TreeFam" id="TF313485"/>
<dbReference type="BioGRID-ORCS" id="56873">
    <property type="hits" value="1 hit in 78 CRISPR screens"/>
</dbReference>
<dbReference type="ChiTaRS" id="Lmbr1">
    <property type="organism name" value="mouse"/>
</dbReference>
<dbReference type="PRO" id="PR:Q9JIT0"/>
<dbReference type="Proteomes" id="UP000000589">
    <property type="component" value="Chromosome 5"/>
</dbReference>
<dbReference type="RNAct" id="Q9JIT0">
    <property type="molecule type" value="protein"/>
</dbReference>
<dbReference type="Bgee" id="ENSMUSG00000010721">
    <property type="expression patterns" value="Expressed in spermatid and 248 other cell types or tissues"/>
</dbReference>
<dbReference type="ExpressionAtlas" id="Q9JIT0">
    <property type="expression patterns" value="baseline and differential"/>
</dbReference>
<dbReference type="GO" id="GO:0016020">
    <property type="term" value="C:membrane"/>
    <property type="evidence" value="ECO:0007669"/>
    <property type="project" value="UniProtKB-SubCell"/>
</dbReference>
<dbReference type="GO" id="GO:0042733">
    <property type="term" value="P:embryonic digit morphogenesis"/>
    <property type="evidence" value="ECO:0000315"/>
    <property type="project" value="MGI"/>
</dbReference>
<dbReference type="GO" id="GO:0035116">
    <property type="term" value="P:embryonic hindlimb morphogenesis"/>
    <property type="evidence" value="ECO:0000266"/>
    <property type="project" value="MGI"/>
</dbReference>
<dbReference type="InterPro" id="IPR008075">
    <property type="entry name" value="LIMR"/>
</dbReference>
<dbReference type="InterPro" id="IPR006876">
    <property type="entry name" value="LMBR1-like_membr_prot"/>
</dbReference>
<dbReference type="PANTHER" id="PTHR12625:SF1">
    <property type="entry name" value="LIMB REGION 1 PROTEIN HOMOLOG"/>
    <property type="match status" value="1"/>
</dbReference>
<dbReference type="PANTHER" id="PTHR12625">
    <property type="entry name" value="LIPOCALIN-1 INTERACTING MEMBRANE RECEPTOR LIMR"/>
    <property type="match status" value="1"/>
</dbReference>
<dbReference type="Pfam" id="PF04791">
    <property type="entry name" value="LMBR1"/>
    <property type="match status" value="2"/>
</dbReference>
<dbReference type="PRINTS" id="PR01692">
    <property type="entry name" value="LIPOCALINIMR"/>
</dbReference>
<protein>
    <recommendedName>
        <fullName>Limb region 1 protein</fullName>
    </recommendedName>
</protein>
<proteinExistence type="evidence at transcript level"/>
<gene>
    <name type="primary">Lmbr1</name>
</gene>
<keyword id="KW-0025">Alternative splicing</keyword>
<keyword id="KW-0175">Coiled coil</keyword>
<keyword id="KW-0472">Membrane</keyword>
<keyword id="KW-0675">Receptor</keyword>
<keyword id="KW-1185">Reference proteome</keyword>
<keyword id="KW-0812">Transmembrane</keyword>
<keyword id="KW-1133">Transmembrane helix</keyword>
<feature type="chain" id="PRO_0000053907" description="Limb region 1 protein">
    <location>
        <begin position="1"/>
        <end position="490"/>
    </location>
</feature>
<feature type="topological domain" description="Extracellular" evidence="2">
    <location>
        <begin position="1"/>
        <end position="19"/>
    </location>
</feature>
<feature type="transmembrane region" description="Helical" evidence="2">
    <location>
        <begin position="20"/>
        <end position="40"/>
    </location>
</feature>
<feature type="topological domain" description="Cytoplasmic" evidence="2">
    <location>
        <begin position="41"/>
        <end position="62"/>
    </location>
</feature>
<feature type="transmembrane region" description="Helical" evidence="2">
    <location>
        <begin position="63"/>
        <end position="83"/>
    </location>
</feature>
<feature type="topological domain" description="Extracellular" evidence="2">
    <location>
        <begin position="84"/>
        <end position="110"/>
    </location>
</feature>
<feature type="transmembrane region" description="Helical" evidence="2">
    <location>
        <begin position="111"/>
        <end position="131"/>
    </location>
</feature>
<feature type="topological domain" description="Cytoplasmic" evidence="2">
    <location>
        <begin position="132"/>
        <end position="151"/>
    </location>
</feature>
<feature type="transmembrane region" description="Helical" evidence="2">
    <location>
        <begin position="152"/>
        <end position="172"/>
    </location>
</feature>
<feature type="topological domain" description="Extracellular" evidence="2">
    <location>
        <begin position="173"/>
        <end position="187"/>
    </location>
</feature>
<feature type="transmembrane region" description="Helical" evidence="2">
    <location>
        <begin position="188"/>
        <end position="208"/>
    </location>
</feature>
<feature type="topological domain" description="Cytoplasmic" evidence="2">
    <location>
        <begin position="209"/>
        <end position="291"/>
    </location>
</feature>
<feature type="transmembrane region" description="Helical" evidence="2">
    <location>
        <begin position="292"/>
        <end position="312"/>
    </location>
</feature>
<feature type="topological domain" description="Extracellular" evidence="2">
    <location>
        <begin position="313"/>
        <end position="339"/>
    </location>
</feature>
<feature type="transmembrane region" description="Helical" evidence="2">
    <location>
        <begin position="340"/>
        <end position="360"/>
    </location>
</feature>
<feature type="topological domain" description="Cytoplasmic" evidence="2">
    <location>
        <begin position="361"/>
        <end position="383"/>
    </location>
</feature>
<feature type="transmembrane region" description="Helical" evidence="2">
    <location>
        <begin position="384"/>
        <end position="404"/>
    </location>
</feature>
<feature type="topological domain" description="Extracellular" evidence="2">
    <location>
        <begin position="405"/>
        <end position="426"/>
    </location>
</feature>
<feature type="transmembrane region" description="Helical" evidence="2">
    <location>
        <begin position="427"/>
        <end position="447"/>
    </location>
</feature>
<feature type="topological domain" description="Cytoplasmic" evidence="2">
    <location>
        <begin position="448"/>
        <end position="490"/>
    </location>
</feature>
<feature type="coiled-coil region" evidence="2">
    <location>
        <begin position="256"/>
        <end position="287"/>
    </location>
</feature>
<feature type="splice variant" id="VSP_016889" description="In isoform 2." evidence="3">
    <original>ICFLLFAILY</original>
    <variation>RNGRFTSYLW</variation>
    <location>
        <begin position="23"/>
        <end position="32"/>
    </location>
</feature>
<feature type="splice variant" id="VSP_016890" description="In isoform 2." evidence="3">
    <location>
        <begin position="33"/>
        <end position="490"/>
    </location>
</feature>
<feature type="splice variant" id="VSP_016891" description="In isoform 3." evidence="4">
    <location>
        <begin position="107"/>
        <end position="133"/>
    </location>
</feature>
<reference key="1">
    <citation type="journal article" date="2000" name="Genomics">
        <title>A novel candidate gene for mouse and human preaxial polydactyly with altered expression in limbs of hemimelic extra-toes mutant mice.</title>
        <authorList>
            <person name="Clark R.M."/>
            <person name="Marker P.C."/>
            <person name="Kingsley D.M."/>
        </authorList>
    </citation>
    <scope>NUCLEOTIDE SEQUENCE [MRNA] (ISOFORMS 1 AND 2)</scope>
    <source>
        <strain>B10.D2/nSn</strain>
    </source>
</reference>
<reference key="2">
    <citation type="journal article" date="2004" name="Genome Res.">
        <title>The status, quality, and expansion of the NIH full-length cDNA project: the Mammalian Gene Collection (MGC).</title>
        <authorList>
            <consortium name="The MGC Project Team"/>
        </authorList>
    </citation>
    <scope>NUCLEOTIDE SEQUENCE [LARGE SCALE MRNA] (ISOFORM 3)</scope>
    <source>
        <tissue>Eye</tissue>
    </source>
</reference>
<reference key="3">
    <citation type="journal article" date="2004" name="Mamm. Genome">
        <title>Phylogenetic conservation of a limb-specific, cis-acting regulator of Sonic hedgehog (Shh).</title>
        <authorList>
            <person name="Sagai T."/>
            <person name="Masuya H."/>
            <person name="Tamura M."/>
            <person name="Shimizu K."/>
            <person name="Yada Y."/>
            <person name="Wakana S."/>
            <person name="Gondo Y."/>
            <person name="Noda T."/>
            <person name="Shiroishi T."/>
        </authorList>
    </citation>
    <scope>NUCLEOTIDE SEQUENCE [GENOMIC DNA] OF 1-141</scope>
</reference>
<name>LMBR1_MOUSE</name>
<organism>
    <name type="scientific">Mus musculus</name>
    <name type="common">Mouse</name>
    <dbReference type="NCBI Taxonomy" id="10090"/>
    <lineage>
        <taxon>Eukaryota</taxon>
        <taxon>Metazoa</taxon>
        <taxon>Chordata</taxon>
        <taxon>Craniata</taxon>
        <taxon>Vertebrata</taxon>
        <taxon>Euteleostomi</taxon>
        <taxon>Mammalia</taxon>
        <taxon>Eutheria</taxon>
        <taxon>Euarchontoglires</taxon>
        <taxon>Glires</taxon>
        <taxon>Rodentia</taxon>
        <taxon>Myomorpha</taxon>
        <taxon>Muroidea</taxon>
        <taxon>Muridae</taxon>
        <taxon>Murinae</taxon>
        <taxon>Mus</taxon>
        <taxon>Mus</taxon>
    </lineage>
</organism>